<dbReference type="EC" id="3.5.1.88" evidence="1"/>
<dbReference type="EMBL" id="AE014299">
    <property type="protein sequence ID" value="AAN55560.1"/>
    <property type="molecule type" value="Genomic_DNA"/>
</dbReference>
<dbReference type="RefSeq" id="NP_718116.1">
    <property type="nucleotide sequence ID" value="NC_004347.2"/>
</dbReference>
<dbReference type="RefSeq" id="WP_011072489.1">
    <property type="nucleotide sequence ID" value="NC_004347.2"/>
</dbReference>
<dbReference type="SMR" id="Q8EE60"/>
<dbReference type="STRING" id="211586.SO_2530"/>
<dbReference type="PaxDb" id="211586-SO_2530"/>
<dbReference type="KEGG" id="son:SO_2530"/>
<dbReference type="PATRIC" id="fig|211586.12.peg.2437"/>
<dbReference type="eggNOG" id="COG0242">
    <property type="taxonomic scope" value="Bacteria"/>
</dbReference>
<dbReference type="HOGENOM" id="CLU_061901_2_1_6"/>
<dbReference type="OrthoDB" id="9804313at2"/>
<dbReference type="PhylomeDB" id="Q8EE60"/>
<dbReference type="BioCyc" id="SONE211586:G1GMP-2319-MONOMER"/>
<dbReference type="Proteomes" id="UP000008186">
    <property type="component" value="Chromosome"/>
</dbReference>
<dbReference type="GO" id="GO:0046872">
    <property type="term" value="F:metal ion binding"/>
    <property type="evidence" value="ECO:0007669"/>
    <property type="project" value="UniProtKB-KW"/>
</dbReference>
<dbReference type="GO" id="GO:0042586">
    <property type="term" value="F:peptide deformylase activity"/>
    <property type="evidence" value="ECO:0000318"/>
    <property type="project" value="GO_Central"/>
</dbReference>
<dbReference type="GO" id="GO:0043686">
    <property type="term" value="P:co-translational protein modification"/>
    <property type="evidence" value="ECO:0000318"/>
    <property type="project" value="GO_Central"/>
</dbReference>
<dbReference type="GO" id="GO:0006412">
    <property type="term" value="P:translation"/>
    <property type="evidence" value="ECO:0007669"/>
    <property type="project" value="UniProtKB-UniRule"/>
</dbReference>
<dbReference type="CDD" id="cd00487">
    <property type="entry name" value="Pep_deformylase"/>
    <property type="match status" value="1"/>
</dbReference>
<dbReference type="Gene3D" id="3.90.45.10">
    <property type="entry name" value="Peptide deformylase"/>
    <property type="match status" value="1"/>
</dbReference>
<dbReference type="HAMAP" id="MF_00163">
    <property type="entry name" value="Pep_deformylase"/>
    <property type="match status" value="1"/>
</dbReference>
<dbReference type="InterPro" id="IPR023635">
    <property type="entry name" value="Peptide_deformylase"/>
</dbReference>
<dbReference type="InterPro" id="IPR036821">
    <property type="entry name" value="Peptide_deformylase_sf"/>
</dbReference>
<dbReference type="NCBIfam" id="TIGR00079">
    <property type="entry name" value="pept_deformyl"/>
    <property type="match status" value="1"/>
</dbReference>
<dbReference type="NCBIfam" id="NF001159">
    <property type="entry name" value="PRK00150.1-3"/>
    <property type="match status" value="1"/>
</dbReference>
<dbReference type="PANTHER" id="PTHR10458">
    <property type="entry name" value="PEPTIDE DEFORMYLASE"/>
    <property type="match status" value="1"/>
</dbReference>
<dbReference type="PANTHER" id="PTHR10458:SF22">
    <property type="entry name" value="PEPTIDE DEFORMYLASE"/>
    <property type="match status" value="1"/>
</dbReference>
<dbReference type="Pfam" id="PF01327">
    <property type="entry name" value="Pep_deformylase"/>
    <property type="match status" value="1"/>
</dbReference>
<dbReference type="PIRSF" id="PIRSF004749">
    <property type="entry name" value="Pep_def"/>
    <property type="match status" value="1"/>
</dbReference>
<dbReference type="PRINTS" id="PR01576">
    <property type="entry name" value="PDEFORMYLASE"/>
</dbReference>
<dbReference type="SUPFAM" id="SSF56420">
    <property type="entry name" value="Peptide deformylase"/>
    <property type="match status" value="1"/>
</dbReference>
<keyword id="KW-0378">Hydrolase</keyword>
<keyword id="KW-0408">Iron</keyword>
<keyword id="KW-0479">Metal-binding</keyword>
<keyword id="KW-0648">Protein biosynthesis</keyword>
<keyword id="KW-1185">Reference proteome</keyword>
<gene>
    <name evidence="1" type="primary">def3</name>
    <name type="ordered locus">SO_2530</name>
</gene>
<evidence type="ECO:0000255" key="1">
    <source>
        <dbReference type="HAMAP-Rule" id="MF_00163"/>
    </source>
</evidence>
<proteinExistence type="inferred from homology"/>
<comment type="function">
    <text evidence="1">Removes the formyl group from the N-terminal Met of newly synthesized proteins. Requires at least a dipeptide for an efficient rate of reaction. N-terminal L-methionine is a prerequisite for activity but the enzyme has broad specificity at other positions.</text>
</comment>
<comment type="catalytic activity">
    <reaction evidence="1">
        <text>N-terminal N-formyl-L-methionyl-[peptide] + H2O = N-terminal L-methionyl-[peptide] + formate</text>
        <dbReference type="Rhea" id="RHEA:24420"/>
        <dbReference type="Rhea" id="RHEA-COMP:10639"/>
        <dbReference type="Rhea" id="RHEA-COMP:10640"/>
        <dbReference type="ChEBI" id="CHEBI:15377"/>
        <dbReference type="ChEBI" id="CHEBI:15740"/>
        <dbReference type="ChEBI" id="CHEBI:49298"/>
        <dbReference type="ChEBI" id="CHEBI:64731"/>
        <dbReference type="EC" id="3.5.1.88"/>
    </reaction>
</comment>
<comment type="cofactor">
    <cofactor evidence="1">
        <name>Fe(2+)</name>
        <dbReference type="ChEBI" id="CHEBI:29033"/>
    </cofactor>
    <text evidence="1">Binds 1 Fe(2+) ion.</text>
</comment>
<comment type="similarity">
    <text evidence="1">Belongs to the polypeptide deformylase family.</text>
</comment>
<protein>
    <recommendedName>
        <fullName evidence="1">Peptide deformylase 3</fullName>
        <shortName evidence="1">PDF 3</shortName>
        <ecNumber evidence="1">3.5.1.88</ecNumber>
    </recommendedName>
    <alternativeName>
        <fullName evidence="1">Polypeptide deformylase 3</fullName>
    </alternativeName>
</protein>
<sequence>MAVLDILTIPDERLKRKAQPVKDIEAIQGFIDDLIETMYHTDDGIGLASTQVGSTDAVIVIDLSETRDQPLVLVNPEIVEKSGEYVGEEGCLSIPGYRAKVTRFEKVKVTALDRQGKAIEIETDDFLAIVLQHEIDHLHGKVFIEHLSTLKQQIALKKVRKYA</sequence>
<reference key="1">
    <citation type="journal article" date="2002" name="Nat. Biotechnol.">
        <title>Genome sequence of the dissimilatory metal ion-reducing bacterium Shewanella oneidensis.</title>
        <authorList>
            <person name="Heidelberg J.F."/>
            <person name="Paulsen I.T."/>
            <person name="Nelson K.E."/>
            <person name="Gaidos E.J."/>
            <person name="Nelson W.C."/>
            <person name="Read T.D."/>
            <person name="Eisen J.A."/>
            <person name="Seshadri R."/>
            <person name="Ward N.L."/>
            <person name="Methe B.A."/>
            <person name="Clayton R.A."/>
            <person name="Meyer T."/>
            <person name="Tsapin A."/>
            <person name="Scott J."/>
            <person name="Beanan M.J."/>
            <person name="Brinkac L.M."/>
            <person name="Daugherty S.C."/>
            <person name="DeBoy R.T."/>
            <person name="Dodson R.J."/>
            <person name="Durkin A.S."/>
            <person name="Haft D.H."/>
            <person name="Kolonay J.F."/>
            <person name="Madupu R."/>
            <person name="Peterson J.D."/>
            <person name="Umayam L.A."/>
            <person name="White O."/>
            <person name="Wolf A.M."/>
            <person name="Vamathevan J.J."/>
            <person name="Weidman J.F."/>
            <person name="Impraim M."/>
            <person name="Lee K."/>
            <person name="Berry K.J."/>
            <person name="Lee C."/>
            <person name="Mueller J."/>
            <person name="Khouri H.M."/>
            <person name="Gill J."/>
            <person name="Utterback T.R."/>
            <person name="McDonald L.A."/>
            <person name="Feldblyum T.V."/>
            <person name="Smith H.O."/>
            <person name="Venter J.C."/>
            <person name="Nealson K.H."/>
            <person name="Fraser C.M."/>
        </authorList>
    </citation>
    <scope>NUCLEOTIDE SEQUENCE [LARGE SCALE GENOMIC DNA]</scope>
    <source>
        <strain>ATCC 700550 / JCM 31522 / CIP 106686 / LMG 19005 / NCIMB 14063 / MR-1</strain>
    </source>
</reference>
<organism>
    <name type="scientific">Shewanella oneidensis (strain ATCC 700550 / JCM 31522 / CIP 106686 / LMG 19005 / NCIMB 14063 / MR-1)</name>
    <dbReference type="NCBI Taxonomy" id="211586"/>
    <lineage>
        <taxon>Bacteria</taxon>
        <taxon>Pseudomonadati</taxon>
        <taxon>Pseudomonadota</taxon>
        <taxon>Gammaproteobacteria</taxon>
        <taxon>Alteromonadales</taxon>
        <taxon>Shewanellaceae</taxon>
        <taxon>Shewanella</taxon>
    </lineage>
</organism>
<accession>Q8EE60</accession>
<feature type="chain" id="PRO_0000082836" description="Peptide deformylase 3">
    <location>
        <begin position="1"/>
        <end position="163"/>
    </location>
</feature>
<feature type="active site" evidence="1">
    <location>
        <position position="134"/>
    </location>
</feature>
<feature type="binding site" evidence="1">
    <location>
        <position position="91"/>
    </location>
    <ligand>
        <name>Fe cation</name>
        <dbReference type="ChEBI" id="CHEBI:24875"/>
    </ligand>
</feature>
<feature type="binding site" evidence="1">
    <location>
        <position position="133"/>
    </location>
    <ligand>
        <name>Fe cation</name>
        <dbReference type="ChEBI" id="CHEBI:24875"/>
    </ligand>
</feature>
<feature type="binding site" evidence="1">
    <location>
        <position position="137"/>
    </location>
    <ligand>
        <name>Fe cation</name>
        <dbReference type="ChEBI" id="CHEBI:24875"/>
    </ligand>
</feature>
<name>DEF3_SHEON</name>